<reference key="1">
    <citation type="submission" date="2006-02" db="EMBL/GenBank/DDBJ databases">
        <title>Complete sequence of chromosome of Jannaschia sp. CCS1.</title>
        <authorList>
            <consortium name="US DOE Joint Genome Institute"/>
            <person name="Copeland A."/>
            <person name="Lucas S."/>
            <person name="Lapidus A."/>
            <person name="Barry K."/>
            <person name="Detter J.C."/>
            <person name="Glavina del Rio T."/>
            <person name="Hammon N."/>
            <person name="Israni S."/>
            <person name="Pitluck S."/>
            <person name="Brettin T."/>
            <person name="Bruce D."/>
            <person name="Han C."/>
            <person name="Tapia R."/>
            <person name="Gilna P."/>
            <person name="Chertkov O."/>
            <person name="Saunders E."/>
            <person name="Schmutz J."/>
            <person name="Larimer F."/>
            <person name="Land M."/>
            <person name="Kyrpides N."/>
            <person name="Lykidis A."/>
            <person name="Moran M.A."/>
            <person name="Belas R."/>
            <person name="Ye W."/>
            <person name="Buchan A."/>
            <person name="Gonzalez J.M."/>
            <person name="Schell M.A."/>
            <person name="Richardson P."/>
        </authorList>
    </citation>
    <scope>NUCLEOTIDE SEQUENCE [LARGE SCALE GENOMIC DNA]</scope>
    <source>
        <strain>CCS1</strain>
    </source>
</reference>
<keyword id="KW-1185">Reference proteome</keyword>
<keyword id="KW-0687">Ribonucleoprotein</keyword>
<keyword id="KW-0689">Ribosomal protein</keyword>
<evidence type="ECO:0000255" key="1">
    <source>
        <dbReference type="HAMAP-Rule" id="MF_01371"/>
    </source>
</evidence>
<evidence type="ECO:0000305" key="2"/>
<dbReference type="EMBL" id="CP000264">
    <property type="protein sequence ID" value="ABD53526.1"/>
    <property type="molecule type" value="Genomic_DNA"/>
</dbReference>
<dbReference type="RefSeq" id="WP_011453734.1">
    <property type="nucleotide sequence ID" value="NC_007802.1"/>
</dbReference>
<dbReference type="SMR" id="Q28UT6"/>
<dbReference type="STRING" id="290400.Jann_0609"/>
<dbReference type="KEGG" id="jan:Jann_0609"/>
<dbReference type="eggNOG" id="COG1841">
    <property type="taxonomic scope" value="Bacteria"/>
</dbReference>
<dbReference type="HOGENOM" id="CLU_131047_1_2_5"/>
<dbReference type="OrthoDB" id="9812790at2"/>
<dbReference type="Proteomes" id="UP000008326">
    <property type="component" value="Chromosome"/>
</dbReference>
<dbReference type="GO" id="GO:0022625">
    <property type="term" value="C:cytosolic large ribosomal subunit"/>
    <property type="evidence" value="ECO:0007669"/>
    <property type="project" value="TreeGrafter"/>
</dbReference>
<dbReference type="GO" id="GO:0003735">
    <property type="term" value="F:structural constituent of ribosome"/>
    <property type="evidence" value="ECO:0007669"/>
    <property type="project" value="InterPro"/>
</dbReference>
<dbReference type="GO" id="GO:0006412">
    <property type="term" value="P:translation"/>
    <property type="evidence" value="ECO:0007669"/>
    <property type="project" value="UniProtKB-UniRule"/>
</dbReference>
<dbReference type="CDD" id="cd01658">
    <property type="entry name" value="Ribosomal_L30"/>
    <property type="match status" value="1"/>
</dbReference>
<dbReference type="Gene3D" id="3.30.1390.20">
    <property type="entry name" value="Ribosomal protein L30, ferredoxin-like fold domain"/>
    <property type="match status" value="1"/>
</dbReference>
<dbReference type="HAMAP" id="MF_01371_B">
    <property type="entry name" value="Ribosomal_uL30_B"/>
    <property type="match status" value="1"/>
</dbReference>
<dbReference type="InterPro" id="IPR036919">
    <property type="entry name" value="Ribo_uL30_ferredoxin-like_sf"/>
</dbReference>
<dbReference type="InterPro" id="IPR005996">
    <property type="entry name" value="Ribosomal_uL30_bac-type"/>
</dbReference>
<dbReference type="InterPro" id="IPR016082">
    <property type="entry name" value="Ribosomal_uL30_ferredoxin-like"/>
</dbReference>
<dbReference type="NCBIfam" id="TIGR01308">
    <property type="entry name" value="rpmD_bact"/>
    <property type="match status" value="1"/>
</dbReference>
<dbReference type="PANTHER" id="PTHR15892:SF2">
    <property type="entry name" value="LARGE RIBOSOMAL SUBUNIT PROTEIN UL30M"/>
    <property type="match status" value="1"/>
</dbReference>
<dbReference type="PANTHER" id="PTHR15892">
    <property type="entry name" value="MITOCHONDRIAL RIBOSOMAL PROTEIN L30"/>
    <property type="match status" value="1"/>
</dbReference>
<dbReference type="Pfam" id="PF00327">
    <property type="entry name" value="Ribosomal_L30"/>
    <property type="match status" value="1"/>
</dbReference>
<dbReference type="PIRSF" id="PIRSF002211">
    <property type="entry name" value="Ribosomal_L30_bac-type"/>
    <property type="match status" value="1"/>
</dbReference>
<dbReference type="SUPFAM" id="SSF55129">
    <property type="entry name" value="Ribosomal protein L30p/L7e"/>
    <property type="match status" value="1"/>
</dbReference>
<gene>
    <name evidence="1" type="primary">rpmD</name>
    <name type="ordered locus">Jann_0609</name>
</gene>
<proteinExistence type="inferred from homology"/>
<name>RL30_JANSC</name>
<accession>Q28UT6</accession>
<comment type="subunit">
    <text evidence="1">Part of the 50S ribosomal subunit.</text>
</comment>
<comment type="similarity">
    <text evidence="1">Belongs to the universal ribosomal protein uL30 family.</text>
</comment>
<organism>
    <name type="scientific">Jannaschia sp. (strain CCS1)</name>
    <dbReference type="NCBI Taxonomy" id="290400"/>
    <lineage>
        <taxon>Bacteria</taxon>
        <taxon>Pseudomonadati</taxon>
        <taxon>Pseudomonadota</taxon>
        <taxon>Alphaproteobacteria</taxon>
        <taxon>Rhodobacterales</taxon>
        <taxon>Roseobacteraceae</taxon>
        <taxon>Jannaschia</taxon>
    </lineage>
</organism>
<protein>
    <recommendedName>
        <fullName evidence="1">Large ribosomal subunit protein uL30</fullName>
    </recommendedName>
    <alternativeName>
        <fullName evidence="2">50S ribosomal protein L30</fullName>
    </alternativeName>
</protein>
<feature type="chain" id="PRO_0000347105" description="Large ribosomal subunit protein uL30">
    <location>
        <begin position="1"/>
        <end position="61"/>
    </location>
</feature>
<sequence>MATIVVKQIGSPIRRPEIQRKTLIGLGLNKMHRTRELEDTPSVRGMINKIPHLVEIVEERG</sequence>